<accession>P0A1N8</accession>
<accession>P15929</accession>
<feature type="signal peptide" evidence="2">
    <location>
        <begin position="1"/>
        <end position="21"/>
    </location>
</feature>
<feature type="chain" id="PRO_0000009471" description="Flagellar L-ring protein">
    <location>
        <begin position="22"/>
        <end position="232"/>
    </location>
</feature>
<feature type="lipid moiety-binding region" description="N-palmitoyl cysteine" evidence="2">
    <location>
        <position position="22"/>
    </location>
</feature>
<feature type="lipid moiety-binding region" description="S-diacylglycerol cysteine" evidence="2">
    <location>
        <position position="22"/>
    </location>
</feature>
<protein>
    <recommendedName>
        <fullName>Flagellar L-ring protein</fullName>
    </recommendedName>
    <alternativeName>
        <fullName>Basal body L-ring protein</fullName>
    </alternativeName>
</protein>
<reference key="1">
    <citation type="journal article" date="1989" name="J. Bacteriol.">
        <title>L-, P-, and M-ring proteins of the flagellar basal body of Salmonella typhimurium: gene sequences and deduced protein sequences.</title>
        <authorList>
            <person name="Jones C.J."/>
            <person name="Homma M."/>
            <person name="Macnab R.M."/>
        </authorList>
    </citation>
    <scope>NUCLEOTIDE SEQUENCE [GENOMIC DNA]</scope>
</reference>
<reference key="2">
    <citation type="journal article" date="2001" name="Nature">
        <title>Complete genome sequence of Salmonella enterica serovar Typhimurium LT2.</title>
        <authorList>
            <person name="McClelland M."/>
            <person name="Sanderson K.E."/>
            <person name="Spieth J."/>
            <person name="Clifton S.W."/>
            <person name="Latreille P."/>
            <person name="Courtney L."/>
            <person name="Porwollik S."/>
            <person name="Ali J."/>
            <person name="Dante M."/>
            <person name="Du F."/>
            <person name="Hou S."/>
            <person name="Layman D."/>
            <person name="Leonard S."/>
            <person name="Nguyen C."/>
            <person name="Scott K."/>
            <person name="Holmes A."/>
            <person name="Grewal N."/>
            <person name="Mulvaney E."/>
            <person name="Ryan E."/>
            <person name="Sun H."/>
            <person name="Florea L."/>
            <person name="Miller W."/>
            <person name="Stoneking T."/>
            <person name="Nhan M."/>
            <person name="Waterston R."/>
            <person name="Wilson R.K."/>
        </authorList>
    </citation>
    <scope>NUCLEOTIDE SEQUENCE [LARGE SCALE GENOMIC DNA]</scope>
    <source>
        <strain>LT2 / SGSC1412 / ATCC 700720</strain>
    </source>
</reference>
<reference key="3">
    <citation type="journal article" date="1990" name="J. Mol. Biol.">
        <title>FlgB, FlgC, FlgF and FlgG. A family of structurally related proteins in the flagellar basal body of Salmonella typhimurium.</title>
        <authorList>
            <person name="Homma M."/>
            <person name="Kutsukake K."/>
            <person name="Hasebe M."/>
            <person name="Iino T."/>
            <person name="Macnab R.M."/>
        </authorList>
    </citation>
    <scope>NUCLEOTIDE SEQUENCE [GENOMIC DNA] OF 1-7</scope>
</reference>
<name>FLGH_SALTY</name>
<comment type="function">
    <text>Assembles around the rod to form the L-ring and probably protects the motor/basal body from shearing forces during rotation.</text>
</comment>
<comment type="subunit">
    <text>The basal body constitutes a major portion of the flagellar organelle and consists of four rings (L,P,S, and M) mounted on a central rod.</text>
</comment>
<comment type="subcellular location">
    <subcellularLocation>
        <location evidence="1">Cell outer membrane</location>
        <topology evidence="1">Lipid-anchor</topology>
    </subcellularLocation>
    <subcellularLocation>
        <location evidence="1">Bacterial flagellum basal body</location>
    </subcellularLocation>
</comment>
<comment type="similarity">
    <text evidence="3">Belongs to the FlgH family.</text>
</comment>
<sequence length="232" mass="24709">MQKYALHAYPVMALMVATLTGCAWIPAKPLVQGATTAQPIPGPVPVANGSIFQSAQPINYGYQPLFEDRRPRNIGDTLTIVLQENVSASKSSSANASRDGKTSFGFDTVPRYLQGLFGNSRADMEASGGNSFNGKGGANASNTFSGTLTVTVDQVLANGNLHVVGEKQIAINQGTEFIRFSGVVNPRTISGSNSVPSTQVADARIEYVGNGYINEAQNMGWLQRFFLNLSPM</sequence>
<evidence type="ECO:0000250" key="1"/>
<evidence type="ECO:0000255" key="2"/>
<evidence type="ECO:0000305" key="3"/>
<keyword id="KW-0002">3D-structure</keyword>
<keyword id="KW-0975">Bacterial flagellum</keyword>
<keyword id="KW-0998">Cell outer membrane</keyword>
<keyword id="KW-0449">Lipoprotein</keyword>
<keyword id="KW-0472">Membrane</keyword>
<keyword id="KW-0564">Palmitate</keyword>
<keyword id="KW-1185">Reference proteome</keyword>
<keyword id="KW-0732">Signal</keyword>
<dbReference type="EMBL" id="M24466">
    <property type="protein sequence ID" value="AAA27068.1"/>
    <property type="molecule type" value="Genomic_DNA"/>
</dbReference>
<dbReference type="EMBL" id="AE006468">
    <property type="protein sequence ID" value="AAL20110.1"/>
    <property type="molecule type" value="Genomic_DNA"/>
</dbReference>
<dbReference type="EMBL" id="X52094">
    <property type="protein sequence ID" value="CAA36315.1"/>
    <property type="molecule type" value="Genomic_DNA"/>
</dbReference>
<dbReference type="PIR" id="A32887">
    <property type="entry name" value="A30930"/>
</dbReference>
<dbReference type="RefSeq" id="NP_460151.1">
    <property type="nucleotide sequence ID" value="NC_003197.2"/>
</dbReference>
<dbReference type="RefSeq" id="WP_001174897.1">
    <property type="nucleotide sequence ID" value="NC_003197.2"/>
</dbReference>
<dbReference type="PDB" id="7BGL">
    <property type="method" value="EM"/>
    <property type="resolution" value="2.20 A"/>
    <property type="chains" value="A/B/C/D/E/F/G/H/I/J/K/L/M/N/O/P/Q/R/S/T/U/V/W/X/Y/Z=1-232"/>
</dbReference>
<dbReference type="PDB" id="7CBL">
    <property type="method" value="EM"/>
    <property type="resolution" value="2.80 A"/>
    <property type="chains" value="A/B/C/D/E/F/G/H/I/J/K/L/M/N/O/P/Q/R/S/T/U/V/W/X/Y/Z=1-232"/>
</dbReference>
<dbReference type="PDB" id="7CGO">
    <property type="method" value="EM"/>
    <property type="resolution" value="3.90 A"/>
    <property type="chains" value="AA/AB/AC/AD/AE/AF/AG/AH/AI/AJ/AK/AL/AM/AN/AO/AP/AQ/AR/AS/AT/AU/AV/AW/AX/AY/AZ=1-232"/>
</dbReference>
<dbReference type="PDB" id="7CLR">
    <property type="method" value="EM"/>
    <property type="resolution" value="3.50 A"/>
    <property type="chains" value="a/b/c/d/e/f/g/h/i/j/k/l/m/n/o/p/q/r/s/t/u/v/w/x/y/z=1-232"/>
</dbReference>
<dbReference type="PDB" id="8WHT">
    <property type="method" value="EM"/>
    <property type="resolution" value="2.75 A"/>
    <property type="chains" value="A/B/C/D/E/F/G/H/I/J/K/L/M/N/O/P/Q/R/S/T/U/V/W/X/Y/Z=1-232"/>
</dbReference>
<dbReference type="PDB" id="8WL2">
    <property type="method" value="EM"/>
    <property type="resolution" value="3.40 A"/>
    <property type="chains" value="A/B/C/D/E/F/G/H/I/J/K/L/M/N/O/P/Q/R/S/T/U/V/W/X/Y/Z=1-232"/>
</dbReference>
<dbReference type="PDB" id="8WLE">
    <property type="method" value="EM"/>
    <property type="resolution" value="3.00 A"/>
    <property type="chains" value="A/B/C/D/E/F/G/H/I/J/K/L/M/N/O/P/Q/R/S/T/U/V/W/X/Y/Z=1-232"/>
</dbReference>
<dbReference type="PDB" id="8WLT">
    <property type="method" value="EM"/>
    <property type="resolution" value="4.10 A"/>
    <property type="chains" value="A/B/C/D/E/F/G/H/I/J/K/L/M/N/O/P/Q/R/S/T/U/V/W/X/Y/Z=1-232"/>
</dbReference>
<dbReference type="PDB" id="8WO5">
    <property type="method" value="EM"/>
    <property type="resolution" value="7.40 A"/>
    <property type="chains" value="A/B/C/D/E/F/G/H/I/J/K/L/M/N/O/P/Q/R/S/T/U/V/W/X/Y/Z=1-232"/>
</dbReference>
<dbReference type="PDB" id="8WOE">
    <property type="method" value="EM"/>
    <property type="resolution" value="4.30 A"/>
    <property type="chains" value="A/B/C/D/E/F/G/H/I/J/K/L/M/N/O/P/Q/R/S/T/U/V/W/X/Y/Z=1-232"/>
</dbReference>
<dbReference type="PDBsum" id="7BGL"/>
<dbReference type="PDBsum" id="7CBL"/>
<dbReference type="PDBsum" id="7CGO"/>
<dbReference type="PDBsum" id="7CLR"/>
<dbReference type="PDBsum" id="8WHT"/>
<dbReference type="PDBsum" id="8WL2"/>
<dbReference type="PDBsum" id="8WLE"/>
<dbReference type="PDBsum" id="8WLT"/>
<dbReference type="PDBsum" id="8WO5"/>
<dbReference type="PDBsum" id="8WOE"/>
<dbReference type="EMDB" id="EMD-12183"/>
<dbReference type="EMDB" id="EMD-30335"/>
<dbReference type="EMDB" id="EMD-30359"/>
<dbReference type="EMDB" id="EMD-37547"/>
<dbReference type="EMDB" id="EMD-37611"/>
<dbReference type="EMDB" id="EMD-37618"/>
<dbReference type="EMDB" id="EMD-37630"/>
<dbReference type="EMDB" id="EMD-37679"/>
<dbReference type="EMDB" id="EMD-37684"/>
<dbReference type="SMR" id="P0A1N8"/>
<dbReference type="STRING" id="99287.STM1180"/>
<dbReference type="PaxDb" id="99287-STM1180"/>
<dbReference type="DNASU" id="1252698"/>
<dbReference type="GeneID" id="1252698"/>
<dbReference type="KEGG" id="stm:STM1180"/>
<dbReference type="PATRIC" id="fig|99287.12.peg.1248"/>
<dbReference type="HOGENOM" id="CLU_069313_0_0_6"/>
<dbReference type="OMA" id="WFDRFFL"/>
<dbReference type="PhylomeDB" id="P0A1N8"/>
<dbReference type="BioCyc" id="SENT99287:STM1180-MONOMER"/>
<dbReference type="Proteomes" id="UP000001014">
    <property type="component" value="Chromosome"/>
</dbReference>
<dbReference type="GO" id="GO:0009427">
    <property type="term" value="C:bacterial-type flagellum basal body, distal rod, L ring"/>
    <property type="evidence" value="ECO:0007669"/>
    <property type="project" value="InterPro"/>
</dbReference>
<dbReference type="GO" id="GO:0009279">
    <property type="term" value="C:cell outer membrane"/>
    <property type="evidence" value="ECO:0007669"/>
    <property type="project" value="UniProtKB-SubCell"/>
</dbReference>
<dbReference type="GO" id="GO:0003774">
    <property type="term" value="F:cytoskeletal motor activity"/>
    <property type="evidence" value="ECO:0007669"/>
    <property type="project" value="InterPro"/>
</dbReference>
<dbReference type="GO" id="GO:0071973">
    <property type="term" value="P:bacterial-type flagellum-dependent cell motility"/>
    <property type="evidence" value="ECO:0007669"/>
    <property type="project" value="InterPro"/>
</dbReference>
<dbReference type="HAMAP" id="MF_00415">
    <property type="entry name" value="FlgH"/>
    <property type="match status" value="1"/>
</dbReference>
<dbReference type="InterPro" id="IPR000527">
    <property type="entry name" value="Flag_Lring"/>
</dbReference>
<dbReference type="NCBIfam" id="NF001301">
    <property type="entry name" value="PRK00249.1-1"/>
    <property type="match status" value="1"/>
</dbReference>
<dbReference type="PANTHER" id="PTHR34933">
    <property type="entry name" value="FLAGELLAR L-RING PROTEIN"/>
    <property type="match status" value="1"/>
</dbReference>
<dbReference type="PANTHER" id="PTHR34933:SF3">
    <property type="entry name" value="FLAGELLAR L-RING PROTEIN"/>
    <property type="match status" value="1"/>
</dbReference>
<dbReference type="Pfam" id="PF02107">
    <property type="entry name" value="FlgH"/>
    <property type="match status" value="1"/>
</dbReference>
<dbReference type="PRINTS" id="PR01008">
    <property type="entry name" value="FLGLRINGFLGH"/>
</dbReference>
<dbReference type="PROSITE" id="PS51257">
    <property type="entry name" value="PROKAR_LIPOPROTEIN"/>
    <property type="match status" value="1"/>
</dbReference>
<gene>
    <name type="primary">flgH</name>
    <name type="synonym">fla FVIII</name>
    <name type="synonym">flaY</name>
    <name type="ordered locus">STM1180</name>
</gene>
<organism>
    <name type="scientific">Salmonella typhimurium (strain LT2 / SGSC1412 / ATCC 700720)</name>
    <dbReference type="NCBI Taxonomy" id="99287"/>
    <lineage>
        <taxon>Bacteria</taxon>
        <taxon>Pseudomonadati</taxon>
        <taxon>Pseudomonadota</taxon>
        <taxon>Gammaproteobacteria</taxon>
        <taxon>Enterobacterales</taxon>
        <taxon>Enterobacteriaceae</taxon>
        <taxon>Salmonella</taxon>
    </lineage>
</organism>
<proteinExistence type="evidence at protein level"/>